<gene>
    <name evidence="1" type="primary">rimM</name>
    <name type="ordered locus">KPN78578_28760</name>
    <name type="ORF">KPN_02931</name>
</gene>
<keyword id="KW-0143">Chaperone</keyword>
<keyword id="KW-0963">Cytoplasm</keyword>
<keyword id="KW-0690">Ribosome biogenesis</keyword>
<keyword id="KW-0698">rRNA processing</keyword>
<accession>A6TCL6</accession>
<evidence type="ECO:0000255" key="1">
    <source>
        <dbReference type="HAMAP-Rule" id="MF_00014"/>
    </source>
</evidence>
<comment type="function">
    <text evidence="1">An accessory protein needed during the final step in the assembly of 30S ribosomal subunit, possibly for assembly of the head region. Essential for efficient processing of 16S rRNA. May be needed both before and after RbfA during the maturation of 16S rRNA. It has affinity for free ribosomal 30S subunits but not for 70S ribosomes.</text>
</comment>
<comment type="subunit">
    <text evidence="1">Binds ribosomal protein uS19.</text>
</comment>
<comment type="subcellular location">
    <subcellularLocation>
        <location evidence="1">Cytoplasm</location>
    </subcellularLocation>
</comment>
<comment type="domain">
    <text evidence="1">The PRC barrel domain binds ribosomal protein uS19.</text>
</comment>
<comment type="similarity">
    <text evidence="1">Belongs to the RimM family.</text>
</comment>
<feature type="chain" id="PRO_1000001181" description="Ribosome maturation factor RimM">
    <location>
        <begin position="1"/>
        <end position="182"/>
    </location>
</feature>
<feature type="domain" description="PRC barrel" evidence="1">
    <location>
        <begin position="103"/>
        <end position="182"/>
    </location>
</feature>
<reference key="1">
    <citation type="submission" date="2006-09" db="EMBL/GenBank/DDBJ databases">
        <authorList>
            <consortium name="The Klebsiella pneumonia Genome Sequencing Project"/>
            <person name="McClelland M."/>
            <person name="Sanderson E.K."/>
            <person name="Spieth J."/>
            <person name="Clifton W.S."/>
            <person name="Latreille P."/>
            <person name="Sabo A."/>
            <person name="Pepin K."/>
            <person name="Bhonagiri V."/>
            <person name="Porwollik S."/>
            <person name="Ali J."/>
            <person name="Wilson R.K."/>
        </authorList>
    </citation>
    <scope>NUCLEOTIDE SEQUENCE [LARGE SCALE GENOMIC DNA]</scope>
    <source>
        <strain>ATCC 700721 / MGH 78578</strain>
    </source>
</reference>
<sequence>MSKQHTAQAPVDPIVLGKMGSSYGIRGWLRVFSSTEDAESIFDYQPWLIQKAGQWQVVELESWRHHNQDIIIKLKGVDDRDAANLLTNCEIIVDSSQLPELEEGDYYWKDLMGCQVVTTEGYSLGKVIDMMETGSNDVLVIKANLKDAFGIKERLVPFLDGQVIKKVDLTTRTIEVDWDPGF</sequence>
<proteinExistence type="inferred from homology"/>
<protein>
    <recommendedName>
        <fullName evidence="1">Ribosome maturation factor RimM</fullName>
    </recommendedName>
</protein>
<organism>
    <name type="scientific">Klebsiella pneumoniae subsp. pneumoniae (strain ATCC 700721 / MGH 78578)</name>
    <dbReference type="NCBI Taxonomy" id="272620"/>
    <lineage>
        <taxon>Bacteria</taxon>
        <taxon>Pseudomonadati</taxon>
        <taxon>Pseudomonadota</taxon>
        <taxon>Gammaproteobacteria</taxon>
        <taxon>Enterobacterales</taxon>
        <taxon>Enterobacteriaceae</taxon>
        <taxon>Klebsiella/Raoultella group</taxon>
        <taxon>Klebsiella</taxon>
        <taxon>Klebsiella pneumoniae complex</taxon>
    </lineage>
</organism>
<dbReference type="EMBL" id="CP000647">
    <property type="protein sequence ID" value="ABR78337.1"/>
    <property type="molecule type" value="Genomic_DNA"/>
</dbReference>
<dbReference type="RefSeq" id="WP_004150977.1">
    <property type="nucleotide sequence ID" value="NC_009648.1"/>
</dbReference>
<dbReference type="SMR" id="A6TCL6"/>
<dbReference type="STRING" id="272620.KPN_02931"/>
<dbReference type="PaxDb" id="272620-KPN_02931"/>
<dbReference type="EnsemblBacteria" id="ABR78337">
    <property type="protein sequence ID" value="ABR78337"/>
    <property type="gene ID" value="KPN_02931"/>
</dbReference>
<dbReference type="GeneID" id="93250229"/>
<dbReference type="KEGG" id="kpn:KPN_02931"/>
<dbReference type="HOGENOM" id="CLU_077636_1_0_6"/>
<dbReference type="Proteomes" id="UP000000265">
    <property type="component" value="Chromosome"/>
</dbReference>
<dbReference type="GO" id="GO:0005737">
    <property type="term" value="C:cytoplasm"/>
    <property type="evidence" value="ECO:0007669"/>
    <property type="project" value="UniProtKB-SubCell"/>
</dbReference>
<dbReference type="GO" id="GO:0005840">
    <property type="term" value="C:ribosome"/>
    <property type="evidence" value="ECO:0007669"/>
    <property type="project" value="InterPro"/>
</dbReference>
<dbReference type="GO" id="GO:0043022">
    <property type="term" value="F:ribosome binding"/>
    <property type="evidence" value="ECO:0007669"/>
    <property type="project" value="InterPro"/>
</dbReference>
<dbReference type="GO" id="GO:0042274">
    <property type="term" value="P:ribosomal small subunit biogenesis"/>
    <property type="evidence" value="ECO:0007669"/>
    <property type="project" value="UniProtKB-UniRule"/>
</dbReference>
<dbReference type="GO" id="GO:0006364">
    <property type="term" value="P:rRNA processing"/>
    <property type="evidence" value="ECO:0007669"/>
    <property type="project" value="UniProtKB-UniRule"/>
</dbReference>
<dbReference type="FunFam" id="2.30.30.240:FF:000001">
    <property type="entry name" value="Ribosome maturation factor RimM"/>
    <property type="match status" value="1"/>
</dbReference>
<dbReference type="FunFam" id="2.40.30.60:FF:000001">
    <property type="entry name" value="Ribosome maturation factor RimM"/>
    <property type="match status" value="1"/>
</dbReference>
<dbReference type="Gene3D" id="2.30.30.240">
    <property type="entry name" value="PRC-barrel domain"/>
    <property type="match status" value="1"/>
</dbReference>
<dbReference type="Gene3D" id="2.40.30.60">
    <property type="entry name" value="RimM"/>
    <property type="match status" value="1"/>
</dbReference>
<dbReference type="HAMAP" id="MF_00014">
    <property type="entry name" value="Ribosome_mat_RimM"/>
    <property type="match status" value="1"/>
</dbReference>
<dbReference type="InterPro" id="IPR011033">
    <property type="entry name" value="PRC_barrel-like_sf"/>
</dbReference>
<dbReference type="InterPro" id="IPR056792">
    <property type="entry name" value="PRC_RimM"/>
</dbReference>
<dbReference type="InterPro" id="IPR011961">
    <property type="entry name" value="RimM"/>
</dbReference>
<dbReference type="InterPro" id="IPR002676">
    <property type="entry name" value="RimM_N"/>
</dbReference>
<dbReference type="InterPro" id="IPR036976">
    <property type="entry name" value="RimM_N_sf"/>
</dbReference>
<dbReference type="InterPro" id="IPR009000">
    <property type="entry name" value="Transl_B-barrel_sf"/>
</dbReference>
<dbReference type="NCBIfam" id="TIGR02273">
    <property type="entry name" value="16S_RimM"/>
    <property type="match status" value="1"/>
</dbReference>
<dbReference type="PANTHER" id="PTHR33692">
    <property type="entry name" value="RIBOSOME MATURATION FACTOR RIMM"/>
    <property type="match status" value="1"/>
</dbReference>
<dbReference type="PANTHER" id="PTHR33692:SF1">
    <property type="entry name" value="RIBOSOME MATURATION FACTOR RIMM"/>
    <property type="match status" value="1"/>
</dbReference>
<dbReference type="Pfam" id="PF24986">
    <property type="entry name" value="PRC_RimM"/>
    <property type="match status" value="1"/>
</dbReference>
<dbReference type="Pfam" id="PF01782">
    <property type="entry name" value="RimM"/>
    <property type="match status" value="1"/>
</dbReference>
<dbReference type="SUPFAM" id="SSF50346">
    <property type="entry name" value="PRC-barrel domain"/>
    <property type="match status" value="1"/>
</dbReference>
<dbReference type="SUPFAM" id="SSF50447">
    <property type="entry name" value="Translation proteins"/>
    <property type="match status" value="1"/>
</dbReference>
<name>RIMM_KLEP7</name>